<keyword id="KW-0106">Calcium</keyword>
<keyword id="KW-0176">Collagen</keyword>
<keyword id="KW-0180">Complement pathway</keyword>
<keyword id="KW-1015">Disulfide bond</keyword>
<keyword id="KW-0325">Glycoprotein</keyword>
<keyword id="KW-0379">Hydroxylation</keyword>
<keyword id="KW-0391">Immunity</keyword>
<keyword id="KW-0399">Innate immunity</keyword>
<keyword id="KW-0479">Metal-binding</keyword>
<keyword id="KW-1185">Reference proteome</keyword>
<keyword id="KW-0677">Repeat</keyword>
<keyword id="KW-0964">Secreted</keyword>
<keyword id="KW-0732">Signal</keyword>
<organism>
    <name type="scientific">Sus scrofa</name>
    <name type="common">Pig</name>
    <dbReference type="NCBI Taxonomy" id="9823"/>
    <lineage>
        <taxon>Eukaryota</taxon>
        <taxon>Metazoa</taxon>
        <taxon>Chordata</taxon>
        <taxon>Craniata</taxon>
        <taxon>Vertebrata</taxon>
        <taxon>Euteleostomi</taxon>
        <taxon>Mammalia</taxon>
        <taxon>Eutheria</taxon>
        <taxon>Laurasiatheria</taxon>
        <taxon>Artiodactyla</taxon>
        <taxon>Suina</taxon>
        <taxon>Suidae</taxon>
        <taxon>Sus</taxon>
    </lineage>
</organism>
<comment type="function">
    <text evidence="1">Core component of the complement C1 complex, a multiprotein complex that initiates the classical pathway of the complement system, a cascade of proteins that leads to phagocytosis and breakdown of pathogens and signaling that strengthens the adaptive immune system. The classical complement pathway is initiated by the C1Q subcomplex of the C1 complex, which specifically binds IgG or IgM immunoglobulins complexed with antigens, forming antigen-antibody complexes on the surface of pathogens: C1QA, together with C1QB and C1QC, specifically recognizes and binds the Fc regions of IgG or IgM via its C1q domain. Immunoglobulin-binding activates the proenzyme C1R, which cleaves C1S, initiating the proteolytic cascade of the complement system. The C1Q subcomplex is activated by a hexamer of IgG complexed with antigens, while it is activated by a pentameric IgM. The C1Q subcomplex also recognizes and binds phosphatidylserine exposed on the surface of cells undergoing programmed cell death, possibly promoting activation of the complement system.</text>
</comment>
<comment type="activity regulation">
    <text evidence="1">The C1Q subcomplex is inhibited by sulfated molecules, such as triterpenoid sulfates, heparan sulfate, or chondroitin sulfates.</text>
</comment>
<comment type="subunit">
    <text evidence="1">Core component of the complement C1 complex, a calcium-dependent complex composed of 1 molecule of the C1Q subcomplex, 2 molecules of C1R and 2 molecules of C1S. The C1Q subcomplex is composed 18 subunits: 3 chains of C1QA, C1QB, and C1QC trimerize to form 6 collagen-like triple helices connected to six globular ligand-recognition modules (C1q domain). Interacts with CR1 (via Sushi 24 and Sushi 25 domains). Interacts (via C-terminus) with CD33; this interaction activates CD33 inhibitory motifs.</text>
</comment>
<comment type="subcellular location">
    <subcellularLocation>
        <location evidence="1">Secreted</location>
    </subcellularLocation>
    <subcellularLocation>
        <location evidence="1">Cell surface</location>
    </subcellularLocation>
    <text evidence="1">Specifically binds IgG or IgM immunoglobulins complexed with antigens, forming antigen-antibody complexes on the surface of pathogens.</text>
</comment>
<comment type="domain">
    <text evidence="1">The C1q domain is the ligand-recognition domain, which specifically recognizes and binds the Fc regions of IgG or IgM immunoglobulins.</text>
</comment>
<comment type="domain">
    <text evidence="1">The collagen-like domain interacts with C1R and C1S proenzymes.</text>
</comment>
<comment type="PTM">
    <text evidence="1">O-linked glycans are assumed to be the Glc-Gal disaccharides typically found as secondary modifications of hydroxylated lysines in collagen-like domains.</text>
</comment>
<feature type="signal peptide" evidence="1">
    <location>
        <begin position="1"/>
        <end position="24"/>
    </location>
</feature>
<feature type="chain" id="PRO_0000003519" description="Complement C1q subcomponent subunit A">
    <location>
        <begin position="25"/>
        <end position="247"/>
    </location>
</feature>
<feature type="domain" description="Collagen-like">
    <location>
        <begin position="33"/>
        <end position="111"/>
    </location>
</feature>
<feature type="domain" description="C1q" evidence="2">
    <location>
        <begin position="112"/>
        <end position="247"/>
    </location>
</feature>
<feature type="region of interest" description="Disordered" evidence="3">
    <location>
        <begin position="26"/>
        <end position="116"/>
    </location>
</feature>
<feature type="compositionally biased region" description="Basic and acidic residues" evidence="3">
    <location>
        <begin position="27"/>
        <end position="38"/>
    </location>
</feature>
<feature type="compositionally biased region" description="Low complexity" evidence="3">
    <location>
        <begin position="98"/>
        <end position="109"/>
    </location>
</feature>
<feature type="binding site" evidence="1">
    <location>
        <position position="201"/>
    </location>
    <ligand>
        <name>Ca(2+)</name>
        <dbReference type="ChEBI" id="CHEBI:29108"/>
    </ligand>
</feature>
<feature type="modified residue" description="4-hydroxyproline" evidence="1">
    <location>
        <position position="41"/>
    </location>
</feature>
<feature type="modified residue" description="4-hydroxyproline" evidence="1">
    <location>
        <position position="47"/>
    </location>
</feature>
<feature type="modified residue" description="5-hydroxylysine" evidence="1">
    <location>
        <position position="50"/>
    </location>
</feature>
<feature type="modified residue" description="4-hydroxyproline" evidence="1">
    <location>
        <position position="56"/>
    </location>
</feature>
<feature type="modified residue" description="4-hydroxyproline" evidence="1">
    <location>
        <position position="59"/>
    </location>
</feature>
<feature type="modified residue" description="5-hydroxylysine" evidence="1">
    <location>
        <position position="69"/>
    </location>
</feature>
<feature type="modified residue" description="4-hydroxyproline" evidence="1">
    <location>
        <position position="81"/>
    </location>
</feature>
<feature type="modified residue" description="4-hydroxyproline" evidence="1">
    <location>
        <position position="87"/>
    </location>
</feature>
<feature type="modified residue" description="5-hydroxylysine" evidence="1">
    <location>
        <position position="102"/>
    </location>
</feature>
<feature type="glycosylation site" description="O-linked (Gal...) hydroxylysine" evidence="1">
    <location>
        <position position="50"/>
    </location>
</feature>
<feature type="glycosylation site" description="O-linked (Gal...) hydroxylysine" evidence="1">
    <location>
        <position position="69"/>
    </location>
</feature>
<feature type="glycosylation site" description="O-linked (Gal...) hydroxylysine" evidence="1">
    <location>
        <position position="102"/>
    </location>
</feature>
<feature type="disulfide bond" description="Interchain (with C-29 in B chain)" evidence="1">
    <location>
        <position position="28"/>
    </location>
</feature>
<feature type="disulfide bond" evidence="1">
    <location>
        <begin position="174"/>
        <end position="192"/>
    </location>
</feature>
<reference key="1">
    <citation type="submission" date="2003-07" db="EMBL/GenBank/DDBJ databases">
        <title>Molecular analysis of soluble porcine complement component genes.</title>
        <authorList>
            <person name="Trakooljul N."/>
            <person name="Ponsuksili S."/>
            <person name="Schellander K."/>
            <person name="Wimmers K."/>
        </authorList>
    </citation>
    <scope>NUCLEOTIDE SEQUENCE [MRNA]</scope>
</reference>
<gene>
    <name type="primary">C1QA</name>
</gene>
<proteinExistence type="evidence at transcript level"/>
<protein>
    <recommendedName>
        <fullName>Complement C1q subcomponent subunit A</fullName>
    </recommendedName>
</protein>
<accession>Q69DL0</accession>
<name>C1QA_PIG</name>
<dbReference type="EMBL" id="AY349424">
    <property type="protein sequence ID" value="AAR20892.1"/>
    <property type="molecule type" value="mRNA"/>
</dbReference>
<dbReference type="RefSeq" id="NP_001003924.1">
    <property type="nucleotide sequence ID" value="NM_001003924.1"/>
</dbReference>
<dbReference type="SMR" id="Q69DL0"/>
<dbReference type="FunCoup" id="Q69DL0">
    <property type="interactions" value="125"/>
</dbReference>
<dbReference type="STRING" id="9823.ENSSSCP00000058150"/>
<dbReference type="GlyCosmos" id="Q69DL0">
    <property type="glycosylation" value="3 sites, No reported glycans"/>
</dbReference>
<dbReference type="GlyGen" id="Q69DL0">
    <property type="glycosylation" value="3 sites"/>
</dbReference>
<dbReference type="PaxDb" id="9823-ENSSSCP00000003825"/>
<dbReference type="PeptideAtlas" id="Q69DL0"/>
<dbReference type="GeneID" id="445461"/>
<dbReference type="KEGG" id="ssc:445461"/>
<dbReference type="CTD" id="712"/>
<dbReference type="eggNOG" id="ENOG502RZM2">
    <property type="taxonomic scope" value="Eukaryota"/>
</dbReference>
<dbReference type="InParanoid" id="Q69DL0"/>
<dbReference type="OrthoDB" id="6343173at2759"/>
<dbReference type="Proteomes" id="UP000008227">
    <property type="component" value="Unplaced"/>
</dbReference>
<dbReference type="Proteomes" id="UP000314985">
    <property type="component" value="Unplaced"/>
</dbReference>
<dbReference type="Proteomes" id="UP000694570">
    <property type="component" value="Unplaced"/>
</dbReference>
<dbReference type="Proteomes" id="UP000694571">
    <property type="component" value="Unplaced"/>
</dbReference>
<dbReference type="Proteomes" id="UP000694720">
    <property type="component" value="Unplaced"/>
</dbReference>
<dbReference type="Proteomes" id="UP000694722">
    <property type="component" value="Unplaced"/>
</dbReference>
<dbReference type="Proteomes" id="UP000694723">
    <property type="component" value="Unplaced"/>
</dbReference>
<dbReference type="Proteomes" id="UP000694724">
    <property type="component" value="Unplaced"/>
</dbReference>
<dbReference type="Proteomes" id="UP000694725">
    <property type="component" value="Unplaced"/>
</dbReference>
<dbReference type="Proteomes" id="UP000694726">
    <property type="component" value="Unplaced"/>
</dbReference>
<dbReference type="Proteomes" id="UP000694727">
    <property type="component" value="Unplaced"/>
</dbReference>
<dbReference type="Proteomes" id="UP000694728">
    <property type="component" value="Unplaced"/>
</dbReference>
<dbReference type="GO" id="GO:0005581">
    <property type="term" value="C:collagen trimer"/>
    <property type="evidence" value="ECO:0007669"/>
    <property type="project" value="UniProtKB-KW"/>
</dbReference>
<dbReference type="GO" id="GO:0005576">
    <property type="term" value="C:extracellular region"/>
    <property type="evidence" value="ECO:0007669"/>
    <property type="project" value="UniProtKB-SubCell"/>
</dbReference>
<dbReference type="GO" id="GO:0006958">
    <property type="term" value="P:complement activation, classical pathway"/>
    <property type="evidence" value="ECO:0007669"/>
    <property type="project" value="UniProtKB-KW"/>
</dbReference>
<dbReference type="GO" id="GO:0045087">
    <property type="term" value="P:innate immune response"/>
    <property type="evidence" value="ECO:0007669"/>
    <property type="project" value="UniProtKB-KW"/>
</dbReference>
<dbReference type="FunFam" id="2.60.120.40:FF:000001">
    <property type="entry name" value="Complement C1q B chain"/>
    <property type="match status" value="1"/>
</dbReference>
<dbReference type="Gene3D" id="2.60.120.40">
    <property type="match status" value="1"/>
</dbReference>
<dbReference type="InterPro" id="IPR001073">
    <property type="entry name" value="C1q_dom"/>
</dbReference>
<dbReference type="InterPro" id="IPR008160">
    <property type="entry name" value="Collagen"/>
</dbReference>
<dbReference type="InterPro" id="IPR050392">
    <property type="entry name" value="Collagen/C1q_domain"/>
</dbReference>
<dbReference type="InterPro" id="IPR008983">
    <property type="entry name" value="Tumour_necrosis_fac-like_dom"/>
</dbReference>
<dbReference type="PANTHER" id="PTHR15427:SF26">
    <property type="entry name" value="COMPLEMENT C1Q SUBCOMPONENT SUBUNIT A"/>
    <property type="match status" value="1"/>
</dbReference>
<dbReference type="PANTHER" id="PTHR15427">
    <property type="entry name" value="EMILIN ELASTIN MICROFIBRIL INTERFACE-LOCATED PROTEIN ELASTIN MICROFIBRIL INTERFACER"/>
    <property type="match status" value="1"/>
</dbReference>
<dbReference type="Pfam" id="PF00386">
    <property type="entry name" value="C1q"/>
    <property type="match status" value="1"/>
</dbReference>
<dbReference type="Pfam" id="PF01391">
    <property type="entry name" value="Collagen"/>
    <property type="match status" value="1"/>
</dbReference>
<dbReference type="PRINTS" id="PR00007">
    <property type="entry name" value="COMPLEMNTC1Q"/>
</dbReference>
<dbReference type="SMART" id="SM00110">
    <property type="entry name" value="C1Q"/>
    <property type="match status" value="1"/>
</dbReference>
<dbReference type="SUPFAM" id="SSF49842">
    <property type="entry name" value="TNF-like"/>
    <property type="match status" value="1"/>
</dbReference>
<dbReference type="PROSITE" id="PS50871">
    <property type="entry name" value="C1Q"/>
    <property type="match status" value="1"/>
</dbReference>
<sequence>MEAPRGWLVIMISVLAVSLASSAAQDTCRDLDGRDGAARKPGRPGRPGPKGERGEPGAPAFQTGIRGLKGDQGESGSPGKPGRMGYPGPSGPPGLPGLPGLKGIKGNPGNIKDQRRPAFSAVRQNPPTSGNVVIFDEVITNQEGAYKSQLGQFICDVPGYYYFTFQVVSKWDLCLYIMSSRRDQVQQSLGFCDFNSKGLFQVVSGGTVLQLQRGDKVWIQRDPNKGRIYQGSEADSVFSGFLIFPST</sequence>
<evidence type="ECO:0000250" key="1">
    <source>
        <dbReference type="UniProtKB" id="P02745"/>
    </source>
</evidence>
<evidence type="ECO:0000255" key="2">
    <source>
        <dbReference type="PROSITE-ProRule" id="PRU00368"/>
    </source>
</evidence>
<evidence type="ECO:0000256" key="3">
    <source>
        <dbReference type="SAM" id="MobiDB-lite"/>
    </source>
</evidence>